<sequence length="469" mass="52436">MNSENALLQSDILAYLEQHEQKDMLRFLTCGSVDDGKSTLIGRLLHDSKMIYEDQLAAITKDSKKSGTTGDKVDLALLVDGLASEREQGITIDVAYRYFSTDKRKFIIADTPGHEQYTRNMVTGASTCDLAIILVDARAGVKTQTRRHSFLVSLLGIKHVIVAINKMDLMEFSEEVYENIKKDYLVFSEQLDIPDIQFVPISALDGDNVVNKSENTPWFEGSTLMKTLENIEIGNDANIDDFRFPVQYVNRPNLNFRGFAGTVVSGQIKKGDKITALPSGKQSTVRSIVGFEGEQEVAYTPLTTTITLEDEIDISRGDMIVKSDNLPLQSSAYEVNLVWMDETPLMPNKQYGFKFATKFVPGSVTDIEHQIDVNTMEHKEAVRLNLNEIGVGKIKLTQSVACDPYTKNRETGAFIIIDRLTNSTVGAGMVIDAIQDSGTKTEYSEFELEFNTLVRKHFPHWNATDITKL</sequence>
<proteinExistence type="inferred from homology"/>
<reference key="1">
    <citation type="submission" date="2006-06" db="EMBL/GenBank/DDBJ databases">
        <title>Complete sequence of Pseudoalteromonas atlantica T6c.</title>
        <authorList>
            <consortium name="US DOE Joint Genome Institute"/>
            <person name="Copeland A."/>
            <person name="Lucas S."/>
            <person name="Lapidus A."/>
            <person name="Barry K."/>
            <person name="Detter J.C."/>
            <person name="Glavina del Rio T."/>
            <person name="Hammon N."/>
            <person name="Israni S."/>
            <person name="Dalin E."/>
            <person name="Tice H."/>
            <person name="Pitluck S."/>
            <person name="Saunders E."/>
            <person name="Brettin T."/>
            <person name="Bruce D."/>
            <person name="Han C."/>
            <person name="Tapia R."/>
            <person name="Gilna P."/>
            <person name="Schmutz J."/>
            <person name="Larimer F."/>
            <person name="Land M."/>
            <person name="Hauser L."/>
            <person name="Kyrpides N."/>
            <person name="Kim E."/>
            <person name="Karls A.C."/>
            <person name="Bartlett D."/>
            <person name="Higgins B.P."/>
            <person name="Richardson P."/>
        </authorList>
    </citation>
    <scope>NUCLEOTIDE SEQUENCE [LARGE SCALE GENOMIC DNA]</scope>
    <source>
        <strain>T6c / ATCC BAA-1087</strain>
    </source>
</reference>
<name>CYSN_PSEA6</name>
<accession>Q15VB8</accession>
<keyword id="KW-0067">ATP-binding</keyword>
<keyword id="KW-0342">GTP-binding</keyword>
<keyword id="KW-0547">Nucleotide-binding</keyword>
<keyword id="KW-0548">Nucleotidyltransferase</keyword>
<keyword id="KW-0808">Transferase</keyword>
<comment type="function">
    <text evidence="2">With CysD forms the ATP sulfurylase (ATPS) that catalyzes the adenylation of sulfate producing adenosine 5'-phosphosulfate (APS) and diphosphate, the first enzymatic step in sulfur assimilation pathway. APS synthesis involves the formation of a high-energy phosphoric-sulfuric acid anhydride bond driven by GTP hydrolysis by CysN coupled to ATP hydrolysis by CysD.</text>
</comment>
<comment type="catalytic activity">
    <reaction evidence="2">
        <text>sulfate + ATP + H(+) = adenosine 5'-phosphosulfate + diphosphate</text>
        <dbReference type="Rhea" id="RHEA:18133"/>
        <dbReference type="ChEBI" id="CHEBI:15378"/>
        <dbReference type="ChEBI" id="CHEBI:16189"/>
        <dbReference type="ChEBI" id="CHEBI:30616"/>
        <dbReference type="ChEBI" id="CHEBI:33019"/>
        <dbReference type="ChEBI" id="CHEBI:58243"/>
        <dbReference type="EC" id="2.7.7.4"/>
    </reaction>
</comment>
<comment type="pathway">
    <text evidence="2">Sulfur metabolism; hydrogen sulfide biosynthesis; sulfite from sulfate: step 1/3.</text>
</comment>
<comment type="subunit">
    <text evidence="2">Heterodimer composed of CysD, the smaller subunit, and CysN.</text>
</comment>
<comment type="similarity">
    <text evidence="2">Belongs to the TRAFAC class translation factor GTPase superfamily. Classic translation factor GTPase family. CysN/NodQ subfamily.</text>
</comment>
<dbReference type="EC" id="2.7.7.4" evidence="2"/>
<dbReference type="EMBL" id="CP000388">
    <property type="protein sequence ID" value="ABG40170.1"/>
    <property type="molecule type" value="Genomic_DNA"/>
</dbReference>
<dbReference type="RefSeq" id="WP_011574476.1">
    <property type="nucleotide sequence ID" value="NC_008228.1"/>
</dbReference>
<dbReference type="SMR" id="Q15VB8"/>
<dbReference type="STRING" id="342610.Patl_1648"/>
<dbReference type="KEGG" id="pat:Patl_1648"/>
<dbReference type="eggNOG" id="COG2895">
    <property type="taxonomic scope" value="Bacteria"/>
</dbReference>
<dbReference type="HOGENOM" id="CLU_007265_5_2_6"/>
<dbReference type="OrthoDB" id="9804504at2"/>
<dbReference type="UniPathway" id="UPA00140">
    <property type="reaction ID" value="UER00204"/>
</dbReference>
<dbReference type="Proteomes" id="UP000001981">
    <property type="component" value="Chromosome"/>
</dbReference>
<dbReference type="GO" id="GO:0005524">
    <property type="term" value="F:ATP binding"/>
    <property type="evidence" value="ECO:0007669"/>
    <property type="project" value="UniProtKB-KW"/>
</dbReference>
<dbReference type="GO" id="GO:0005525">
    <property type="term" value="F:GTP binding"/>
    <property type="evidence" value="ECO:0007669"/>
    <property type="project" value="UniProtKB-UniRule"/>
</dbReference>
<dbReference type="GO" id="GO:0003924">
    <property type="term" value="F:GTPase activity"/>
    <property type="evidence" value="ECO:0007669"/>
    <property type="project" value="InterPro"/>
</dbReference>
<dbReference type="GO" id="GO:0004781">
    <property type="term" value="F:sulfate adenylyltransferase (ATP) activity"/>
    <property type="evidence" value="ECO:0007669"/>
    <property type="project" value="UniProtKB-UniRule"/>
</dbReference>
<dbReference type="GO" id="GO:0070814">
    <property type="term" value="P:hydrogen sulfide biosynthetic process"/>
    <property type="evidence" value="ECO:0007669"/>
    <property type="project" value="UniProtKB-UniRule"/>
</dbReference>
<dbReference type="GO" id="GO:0000103">
    <property type="term" value="P:sulfate assimilation"/>
    <property type="evidence" value="ECO:0007669"/>
    <property type="project" value="UniProtKB-UniRule"/>
</dbReference>
<dbReference type="CDD" id="cd04166">
    <property type="entry name" value="CysN_ATPS"/>
    <property type="match status" value="1"/>
</dbReference>
<dbReference type="CDD" id="cd03695">
    <property type="entry name" value="CysN_NodQ_II"/>
    <property type="match status" value="1"/>
</dbReference>
<dbReference type="CDD" id="cd04095">
    <property type="entry name" value="CysN_NoDQ_III"/>
    <property type="match status" value="1"/>
</dbReference>
<dbReference type="FunFam" id="2.40.30.10:FF:000027">
    <property type="entry name" value="Sulfate adenylyltransferase subunit 1"/>
    <property type="match status" value="1"/>
</dbReference>
<dbReference type="FunFam" id="3.40.50.300:FF:000119">
    <property type="entry name" value="Sulfate adenylyltransferase subunit 1"/>
    <property type="match status" value="1"/>
</dbReference>
<dbReference type="Gene3D" id="3.40.50.300">
    <property type="entry name" value="P-loop containing nucleotide triphosphate hydrolases"/>
    <property type="match status" value="1"/>
</dbReference>
<dbReference type="Gene3D" id="2.40.30.10">
    <property type="entry name" value="Translation factors"/>
    <property type="match status" value="2"/>
</dbReference>
<dbReference type="HAMAP" id="MF_00062">
    <property type="entry name" value="Sulf_adenylyltr_sub1"/>
    <property type="match status" value="1"/>
</dbReference>
<dbReference type="InterPro" id="IPR041757">
    <property type="entry name" value="CysN_GTP-bd"/>
</dbReference>
<dbReference type="InterPro" id="IPR044138">
    <property type="entry name" value="CysN_II"/>
</dbReference>
<dbReference type="InterPro" id="IPR044139">
    <property type="entry name" value="CysN_NoDQ_III"/>
</dbReference>
<dbReference type="InterPro" id="IPR031157">
    <property type="entry name" value="G_TR_CS"/>
</dbReference>
<dbReference type="InterPro" id="IPR054696">
    <property type="entry name" value="GTP-eEF1A_C"/>
</dbReference>
<dbReference type="InterPro" id="IPR027417">
    <property type="entry name" value="P-loop_NTPase"/>
</dbReference>
<dbReference type="InterPro" id="IPR005225">
    <property type="entry name" value="Small_GTP-bd"/>
</dbReference>
<dbReference type="InterPro" id="IPR011779">
    <property type="entry name" value="SO4_adenylTrfase_lsu"/>
</dbReference>
<dbReference type="InterPro" id="IPR000795">
    <property type="entry name" value="T_Tr_GTP-bd_dom"/>
</dbReference>
<dbReference type="InterPro" id="IPR050100">
    <property type="entry name" value="TRAFAC_GTPase_members"/>
</dbReference>
<dbReference type="InterPro" id="IPR009000">
    <property type="entry name" value="Transl_B-barrel_sf"/>
</dbReference>
<dbReference type="InterPro" id="IPR009001">
    <property type="entry name" value="Transl_elong_EF1A/Init_IF2_C"/>
</dbReference>
<dbReference type="NCBIfam" id="TIGR02034">
    <property type="entry name" value="CysN"/>
    <property type="match status" value="1"/>
</dbReference>
<dbReference type="NCBIfam" id="NF003478">
    <property type="entry name" value="PRK05124.1"/>
    <property type="match status" value="1"/>
</dbReference>
<dbReference type="NCBIfam" id="NF004035">
    <property type="entry name" value="PRK05506.1"/>
    <property type="match status" value="1"/>
</dbReference>
<dbReference type="NCBIfam" id="TIGR00231">
    <property type="entry name" value="small_GTP"/>
    <property type="match status" value="1"/>
</dbReference>
<dbReference type="PANTHER" id="PTHR23115">
    <property type="entry name" value="TRANSLATION FACTOR"/>
    <property type="match status" value="1"/>
</dbReference>
<dbReference type="Pfam" id="PF22594">
    <property type="entry name" value="GTP-eEF1A_C"/>
    <property type="match status" value="1"/>
</dbReference>
<dbReference type="Pfam" id="PF00009">
    <property type="entry name" value="GTP_EFTU"/>
    <property type="match status" value="1"/>
</dbReference>
<dbReference type="PRINTS" id="PR00315">
    <property type="entry name" value="ELONGATNFCT"/>
</dbReference>
<dbReference type="SUPFAM" id="SSF50465">
    <property type="entry name" value="EF-Tu/eEF-1alpha/eIF2-gamma C-terminal domain"/>
    <property type="match status" value="1"/>
</dbReference>
<dbReference type="SUPFAM" id="SSF52540">
    <property type="entry name" value="P-loop containing nucleoside triphosphate hydrolases"/>
    <property type="match status" value="1"/>
</dbReference>
<dbReference type="SUPFAM" id="SSF50447">
    <property type="entry name" value="Translation proteins"/>
    <property type="match status" value="1"/>
</dbReference>
<dbReference type="PROSITE" id="PS00301">
    <property type="entry name" value="G_TR_1"/>
    <property type="match status" value="1"/>
</dbReference>
<dbReference type="PROSITE" id="PS51722">
    <property type="entry name" value="G_TR_2"/>
    <property type="match status" value="1"/>
</dbReference>
<feature type="chain" id="PRO_1000092149" description="Sulfate adenylyltransferase subunit 1">
    <location>
        <begin position="1"/>
        <end position="469"/>
    </location>
</feature>
<feature type="domain" description="tr-type G">
    <location>
        <begin position="22"/>
        <end position="236"/>
    </location>
</feature>
<feature type="region of interest" description="G1" evidence="1">
    <location>
        <begin position="31"/>
        <end position="38"/>
    </location>
</feature>
<feature type="region of interest" description="G2" evidence="1">
    <location>
        <begin position="89"/>
        <end position="93"/>
    </location>
</feature>
<feature type="region of interest" description="G3" evidence="1">
    <location>
        <begin position="110"/>
        <end position="113"/>
    </location>
</feature>
<feature type="region of interest" description="G4" evidence="1">
    <location>
        <begin position="165"/>
        <end position="168"/>
    </location>
</feature>
<feature type="region of interest" description="G5" evidence="1">
    <location>
        <begin position="202"/>
        <end position="204"/>
    </location>
</feature>
<feature type="binding site" evidence="2">
    <location>
        <begin position="31"/>
        <end position="38"/>
    </location>
    <ligand>
        <name>GTP</name>
        <dbReference type="ChEBI" id="CHEBI:37565"/>
    </ligand>
</feature>
<feature type="binding site" evidence="2">
    <location>
        <begin position="110"/>
        <end position="114"/>
    </location>
    <ligand>
        <name>GTP</name>
        <dbReference type="ChEBI" id="CHEBI:37565"/>
    </ligand>
</feature>
<feature type="binding site" evidence="2">
    <location>
        <begin position="165"/>
        <end position="168"/>
    </location>
    <ligand>
        <name>GTP</name>
        <dbReference type="ChEBI" id="CHEBI:37565"/>
    </ligand>
</feature>
<organism>
    <name type="scientific">Pseudoalteromonas atlantica (strain T6c / ATCC BAA-1087)</name>
    <dbReference type="NCBI Taxonomy" id="3042615"/>
    <lineage>
        <taxon>Bacteria</taxon>
        <taxon>Pseudomonadati</taxon>
        <taxon>Pseudomonadota</taxon>
        <taxon>Gammaproteobacteria</taxon>
        <taxon>Alteromonadales</taxon>
        <taxon>Alteromonadaceae</taxon>
        <taxon>Paraglaciecola</taxon>
    </lineage>
</organism>
<evidence type="ECO:0000250" key="1"/>
<evidence type="ECO:0000255" key="2">
    <source>
        <dbReference type="HAMAP-Rule" id="MF_00062"/>
    </source>
</evidence>
<protein>
    <recommendedName>
        <fullName evidence="2">Sulfate adenylyltransferase subunit 1</fullName>
        <ecNumber evidence="2">2.7.7.4</ecNumber>
    </recommendedName>
    <alternativeName>
        <fullName evidence="2">ATP-sulfurylase large subunit</fullName>
    </alternativeName>
    <alternativeName>
        <fullName evidence="2">Sulfate adenylate transferase</fullName>
        <shortName evidence="2">SAT</shortName>
    </alternativeName>
</protein>
<gene>
    <name evidence="2" type="primary">cysN</name>
    <name type="ordered locus">Patl_1648</name>
</gene>